<reference key="1">
    <citation type="submission" date="2007-04" db="EMBL/GenBank/DDBJ databases">
        <authorList>
            <consortium name="NIH - Mammalian Gene Collection (MGC) project"/>
        </authorList>
    </citation>
    <scope>NUCLEOTIDE SEQUENCE [LARGE SCALE MRNA]</scope>
    <source>
        <strain>Hereford</strain>
        <tissue>Fetal muscle</tissue>
    </source>
</reference>
<feature type="chain" id="PRO_0000341946" description="Endoplasmic reticulum membrane sensor NFE2L1">
    <location>
        <begin position="1"/>
        <end position="763"/>
    </location>
</feature>
<feature type="chain" id="PRO_0000443102" description="Transcription factor NRF1" evidence="1">
    <location>
        <begin position="104"/>
        <end position="763"/>
    </location>
</feature>
<feature type="transmembrane region" description="Helical; Signal-anchor for type II membrane protein" evidence="3">
    <location>
        <begin position="7"/>
        <end position="24"/>
    </location>
</feature>
<feature type="domain" description="bZIP" evidence="4">
    <location>
        <begin position="645"/>
        <end position="708"/>
    </location>
</feature>
<feature type="region of interest" description="Disordered" evidence="5">
    <location>
        <begin position="108"/>
        <end position="150"/>
    </location>
</feature>
<feature type="region of interest" description="Cholesterol recognition/amino acid consensus (CRAC) region" evidence="2">
    <location>
        <begin position="180"/>
        <end position="188"/>
    </location>
</feature>
<feature type="region of interest" description="CPD" evidence="2">
    <location>
        <begin position="369"/>
        <end position="373"/>
    </location>
</feature>
<feature type="region of interest" description="Disordered" evidence="5">
    <location>
        <begin position="460"/>
        <end position="523"/>
    </location>
</feature>
<feature type="region of interest" description="Disordered" evidence="5">
    <location>
        <begin position="585"/>
        <end position="604"/>
    </location>
</feature>
<feature type="region of interest" description="Basic motif" evidence="4">
    <location>
        <begin position="647"/>
        <end position="666"/>
    </location>
</feature>
<feature type="region of interest" description="Leucine-zipper" evidence="4">
    <location>
        <begin position="673"/>
        <end position="687"/>
    </location>
</feature>
<feature type="short sequence motif" description="Destruction motif" evidence="2">
    <location>
        <begin position="466"/>
        <end position="470"/>
    </location>
</feature>
<feature type="short sequence motif" description="Nuclear localization signal" evidence="3">
    <location>
        <begin position="752"/>
        <end position="759"/>
    </location>
</feature>
<feature type="compositionally biased region" description="Low complexity" evidence="5">
    <location>
        <begin position="116"/>
        <end position="131"/>
    </location>
</feature>
<feature type="compositionally biased region" description="Low complexity" evidence="5">
    <location>
        <begin position="466"/>
        <end position="514"/>
    </location>
</feature>
<feature type="compositionally biased region" description="Basic and acidic residues" evidence="5">
    <location>
        <begin position="589"/>
        <end position="604"/>
    </location>
</feature>
<feature type="site" description="Cleavage; by DDI2" evidence="1">
    <location>
        <begin position="103"/>
        <end position="104"/>
    </location>
</feature>
<feature type="modified residue" description="Phosphoserine; by CK2" evidence="2">
    <location>
        <position position="519"/>
    </location>
</feature>
<feature type="modified residue" description="Phosphoserine; by PKA" evidence="1">
    <location>
        <position position="590"/>
    </location>
</feature>
<feature type="glycosylation site" description="N-linked (GlcNAc...) asparagine" evidence="3">
    <location>
        <position position="338"/>
    </location>
</feature>
<feature type="glycosylation site" description="N-linked (GlcNAc...) asparagine" evidence="3">
    <location>
        <position position="350"/>
    </location>
</feature>
<feature type="glycosylation site" description="N-linked (GlcNAc...) asparagine" evidence="3">
    <location>
        <position position="413"/>
    </location>
</feature>
<keyword id="KW-0010">Activator</keyword>
<keyword id="KW-0153">Cholesterol metabolism</keyword>
<keyword id="KW-0238">DNA-binding</keyword>
<keyword id="KW-0256">Endoplasmic reticulum</keyword>
<keyword id="KW-0325">Glycoprotein</keyword>
<keyword id="KW-0443">Lipid metabolism</keyword>
<keyword id="KW-0446">Lipid-binding</keyword>
<keyword id="KW-0472">Membrane</keyword>
<keyword id="KW-0539">Nucleus</keyword>
<keyword id="KW-0597">Phosphoprotein</keyword>
<keyword id="KW-1185">Reference proteome</keyword>
<keyword id="KW-0678">Repressor</keyword>
<keyword id="KW-0735">Signal-anchor</keyword>
<keyword id="KW-0753">Steroid metabolism</keyword>
<keyword id="KW-1207">Sterol metabolism</keyword>
<keyword id="KW-0804">Transcription</keyword>
<keyword id="KW-0805">Transcription regulation</keyword>
<keyword id="KW-0812">Transmembrane</keyword>
<keyword id="KW-1133">Transmembrane helix</keyword>
<keyword id="KW-0832">Ubl conjugation</keyword>
<organism>
    <name type="scientific">Bos taurus</name>
    <name type="common">Bovine</name>
    <dbReference type="NCBI Taxonomy" id="9913"/>
    <lineage>
        <taxon>Eukaryota</taxon>
        <taxon>Metazoa</taxon>
        <taxon>Chordata</taxon>
        <taxon>Craniata</taxon>
        <taxon>Vertebrata</taxon>
        <taxon>Euteleostomi</taxon>
        <taxon>Mammalia</taxon>
        <taxon>Eutheria</taxon>
        <taxon>Laurasiatheria</taxon>
        <taxon>Artiodactyla</taxon>
        <taxon>Ruminantia</taxon>
        <taxon>Pecora</taxon>
        <taxon>Bovidae</taxon>
        <taxon>Bovinae</taxon>
        <taxon>Bos</taxon>
    </lineage>
</organism>
<proteinExistence type="evidence at transcript level"/>
<accession>A5D7E9</accession>
<protein>
    <recommendedName>
        <fullName evidence="6">Endoplasmic reticulum membrane sensor NFE2L1</fullName>
    </recommendedName>
    <alternativeName>
        <fullName evidence="1">Nuclear factor erythroid 2-related factor 1</fullName>
        <shortName evidence="1">NF-E2-related factor 1</shortName>
        <shortName evidence="1">NFE2-related factor 1</shortName>
    </alternativeName>
    <alternativeName>
        <fullName evidence="1">Nuclear factor, erythroid derived 2, like 1</fullName>
    </alternativeName>
    <component>
        <recommendedName>
            <fullName evidence="1">Transcription factor NRF1</fullName>
        </recommendedName>
    </component>
</protein>
<sequence length="763" mass="83607">MLSLKKYLTEGLLQFTILLSLIGVRVDVDTYLTSQLPPLREIILGPSSAYTQTQFHNLRNTLDGYGIHPKSIDLDNYFTARRLLNQVRALDRFQVPTTEVNAWLVHRDPEGSVSGSQPSSGLALESSSGLQDVTGPDNGVRESETEQGFSEDLEDLGAVAPPVSGDLTKEDIDLGAGREIFDYSHRQKEQDVDKELRDGAEQEDTWPGEGAEALARNLLVDGETGESFPAQVPGGEDQTALSLEECLRLLEATCPFGENAEFPADISSITEAVPSESEPPGLQNNLLSPLLTGTESPFDLEQQWQDLMSIMEMQAMEVNTSTSEVLYNAPPGDPLSTNYSLAPNTPINQNVSLHQASLGGCSQDFSLFSPEVESLPVASSSTLLPLVPSNSTSLNSTFGSTNLAGLFFPPQLNGTANDTAGPELPDPLGGLLDEAMLDEISLMDLAIEEGFNPVQASQLEEEFDSDSGLSLDSSHSPSSLSSSEGSSSSSSSSSSSSSSSASSSASSSFSEEGAVGYSSDSETLDLEEAEGAVGYQPEYSKFCRMSYQDPSQLSCLPYLEHVGHNHTYNMAPSALDSADLPPPSTLKKGSKEKQADFLDKQMSRDEHRARAMKIPFTNDKIINLPVEEFNELLSKYQLSEAQLSLIRDIRRRGKNKMAAQNCRKRKLDTILNLERDVEDLQRDKARLLREKVEFLRSLRQMKQKVQSLYQEVFGRLRDENGRPYSPSQYALQYAGDGSVLLIPRTLADQQARRQERKPKDRRK</sequence>
<gene>
    <name evidence="1" type="primary">NFE2L1</name>
    <name evidence="1" type="synonym">NRF1</name>
</gene>
<name>NF2L1_BOVIN</name>
<comment type="function">
    <molecule>Endoplasmic reticulum membrane sensor NFE2L1</molecule>
    <text evidence="1 2">Endoplasmic reticulum membrane sensor that translocates into the nucleus in response to various stresses to act as a transcription factor (By similarity). Constitutes a precursor of the transcription factor NRF1 (By similarity). Able to detect various cellular stresses, such as cholesterol excess, oxidative stress or proteasome inhibition (By similarity). In response to stress, it is released from the endoplasmic reticulum membrane following cleavage by the protease DDI2 and translocates into the nucleus to form the transcription factor NRF1 (By similarity). Acts as a key sensor of cholesterol excess: in excess cholesterol conditions, the endoplasmic reticulum membrane form of the protein directly binds cholesterol via its CRAC motif, preventing cleavage and release of the transcription factor NRF1, thereby allowing expression of genes promoting cholesterol removal, such as CD36 (By similarity). Involved in proteasome homeostasis: in response to proteasome inhibition, it is released from the endoplasmic reticulum membrane, translocates to the nucleus and activates expression of genes encoding proteasome subunits (By similarity).</text>
</comment>
<comment type="function">
    <molecule>Transcription factor NRF1</molecule>
    <text evidence="1 2">CNC-type bZIP family transcription factor that translocates to the nucleus and regulates expression of target genes in response to various stresses. Heterodimerizes with small-Maf proteins (MAFF, MAFG or MAFK) and binds DNA motifs including the antioxidant response elements (AREs), which regulate expression of genes involved in oxidative stress response. Activates or represses expression of target genes, depending on the context (By similarity). Plays a key role in cholesterol homeostasis by acting as a sensor of cholesterol excess: in low cholesterol conditions, translocates into the nucleus and represses expression of genes involved in defense against cholesterol excess, such as CD36 (By similarity). In excess cholesterol conditions, the endoplasmic reticulum membrane form of the protein directly binds cholesterol via its CRAC motif, preventing cleavage and release of the transcription factor NRF1, thereby allowing expression of genes promoting cholesterol removal (By similarity). Critical for redox balance in response to oxidative stress: acts by binding the AREs motifs on promoters and mediating activation of oxidative stress response genes, such as GCLC, GCLM, GSS, MT1 and MT2 (By similarity). Plays an essential role during fetal liver hematopoiesis: probably has a protective function against oxidative stress and is involved in lipid homeostasis in the liver (By similarity). Involved in proteasome homeostasis: in response to proteasome inhibition, mediates the 'bounce-back' of proteasome subunits by translocating into the nucleus and activating expression of genes encoding proteasome subunits (By similarity). Also involved in regulating glucose flux (By similarity). Together with CEBPB; represses expression of DSPP during odontoblast differentiation. In response to ascorbic acid induction, activates expression of SP7/Osterix in osteoblasts (By similarity).</text>
</comment>
<comment type="subunit">
    <text evidence="1">Interacts with KEAP1.</text>
</comment>
<comment type="subunit">
    <molecule>Endoplasmic reticulum membrane sensor NFE2L1</molecule>
    <text evidence="1 2">Interacts (via CPD region) with FBXW7; leading to its ubiquitination and degradation. Interacts with SYVN1/HRD1; leading to its ubiquitination and degradation. Interacts (when ubiquitinated) with DDI2; leading to its cleavage.</text>
</comment>
<comment type="subunit">
    <molecule>Transcription factor NRF1</molecule>
    <text evidence="1 2">Interacts (via the bZIP domain) with small MAF protein (MAFF, MAFG or MAFK); required for binding to antioxidant response elements (AREs) on DNA. Interacts (via Destruction motif) with BTRC; leading to its ubiquitination and degradation. Interacts with CEBPB; the heterodimer represses expression of DSPP during odontoblast differentiation. Interacts with MOTS-c, a peptide produced by the mitochondrially encoded 12S rRNA MT-RNR1.</text>
</comment>
<comment type="subcellular location">
    <molecule>Endoplasmic reticulum membrane sensor NFE2L1</molecule>
    <subcellularLocation>
        <location evidence="1">Endoplasmic reticulum membrane</location>
        <topology evidence="1">Single-pass type II membrane protein</topology>
    </subcellularLocation>
    <subcellularLocation>
        <location evidence="1">Endoplasmic reticulum membrane</location>
        <topology evidence="1">Single-pass type III membrane protein</topology>
    </subcellularLocation>
    <text evidence="1">In normal conditions, probably has a single-pass type II membrane protein topology, with the DNA-binding domain facing the endoplasmic reticulum lumen. Following cellular stress, it is rapidly and efficiently retrotranslocated to the cytosolic side of the membrane, a process dependent on p97/VCP, to have a single-pass type III membrane protein topology with the major part of the protein facing the cytosol. Retrotranslocated proteins are normally rapidly degraded by the proteasome and active species do not accumulate. However, retrotranslocated protein NFE2L1 escapes degradation and is cleaved at Leu-104 by DDI2, releasing the protein from the endoplasmic reticulum membrane and forming the transcription factor NRF1 that translocates into the nucleus.</text>
</comment>
<comment type="subcellular location">
    <molecule>Transcription factor NRF1</molecule>
    <subcellularLocation>
        <location evidence="1 4">Nucleus</location>
    </subcellularLocation>
    <text evidence="1">Translocates into the nucleus following cleavage of Endoplasmic reticulum membrane sensor NFE2L1 by aspartyl protease DDI2.</text>
</comment>
<comment type="domain">
    <text evidence="2">The cholesterol recognition/amino acid consensus (CRAC) region directly binds cholesterol, as well as campesterol and 27-hydroxycholesterol. Has much lower affinity for epicholesterol.</text>
</comment>
<comment type="PTM">
    <molecule>Endoplasmic reticulum membrane sensor NFE2L1</molecule>
    <text evidence="1">Cleaved at Leu-104 by the aspartyl protease DDI2 following retrotranslocation, releasing the protein from the endoplasmic reticulum membrane and forming the transcription factor NRF1 that translocates into the nucleus. Ubiquitination is prerequisite for cleavage by aspartyl protease DDI2.</text>
</comment>
<comment type="PTM">
    <molecule>Endoplasmic reticulum membrane sensor NFE2L1</molecule>
    <text evidence="1 2">N-glycosylated in normal conditions, when it has a single-pass type II membrane protein topology, with the DNA-binding domain facing the endoplasmic reticulum lumen (By similarity). Deglycosylated during retrotranslocation to the cytosolic side of the membrane, to have a single-pass type III membrane protein topology with the major part of the protein facing the cytosol (By similarity).</text>
</comment>
<comment type="PTM">
    <molecule>Endoplasmic reticulum membrane sensor NFE2L1</molecule>
    <text evidence="1 2">Ubiquitinated by the SCF(FBXW7) complex and SYVN1/HRD1, leading to its degradation by the proteasome (By similarity). Ubiquitinated during retrotranslocation to the cytosolic side of the membrane: ubiquitination does not lead to degradation and is required for processing by the aspartyl protease DDI2 and subsequent release from the endoplasmic reticulum membrane (By similarity).</text>
</comment>
<comment type="PTM">
    <molecule>Transcription factor NRF1</molecule>
    <text evidence="1 2">Phosphorylation by CK2 at Ser-519 inhibits transcription factor activity, possibly by affecting DNA-binding activity (By similarity). Phosphorylation at Ser-590 is required for interaction with CEBPB (By similarity).</text>
</comment>
<comment type="PTM">
    <molecule>Transcription factor NRF1</molecule>
    <text evidence="2">Ubiquitinated by the SCF(BTRC) complex in the nucleus, leading to its degradation by the proteasome.</text>
</comment>
<comment type="similarity">
    <text evidence="6">Belongs to the bZIP family. CNC subfamily.</text>
</comment>
<dbReference type="EMBL" id="BC140530">
    <property type="protein sequence ID" value="AAI40531.1"/>
    <property type="molecule type" value="mRNA"/>
</dbReference>
<dbReference type="RefSeq" id="NP_001095985.1">
    <property type="nucleotide sequence ID" value="NM_001102515.1"/>
</dbReference>
<dbReference type="RefSeq" id="XP_005220649.1">
    <property type="nucleotide sequence ID" value="XM_005220592.5"/>
</dbReference>
<dbReference type="RefSeq" id="XP_024836040.1">
    <property type="nucleotide sequence ID" value="XM_024980272.2"/>
</dbReference>
<dbReference type="SMR" id="A5D7E9"/>
<dbReference type="FunCoup" id="A5D7E9">
    <property type="interactions" value="673"/>
</dbReference>
<dbReference type="STRING" id="9913.ENSBTAP00000060634"/>
<dbReference type="GlyCosmos" id="A5D7E9">
    <property type="glycosylation" value="3 sites, No reported glycans"/>
</dbReference>
<dbReference type="GlyGen" id="A5D7E9">
    <property type="glycosylation" value="3 sites"/>
</dbReference>
<dbReference type="PaxDb" id="9913-ENSBTAP00000018147"/>
<dbReference type="Ensembl" id="ENSBTAT00000018147.6">
    <property type="protein sequence ID" value="ENSBTAP00000018147.5"/>
    <property type="gene ID" value="ENSBTAG00000013653.7"/>
</dbReference>
<dbReference type="GeneID" id="534582"/>
<dbReference type="KEGG" id="bta:534582"/>
<dbReference type="CTD" id="4779"/>
<dbReference type="VEuPathDB" id="HostDB:ENSBTAG00000013653"/>
<dbReference type="VGNC" id="VGNC:32035">
    <property type="gene designation" value="NFE2L1"/>
</dbReference>
<dbReference type="eggNOG" id="KOG3863">
    <property type="taxonomic scope" value="Eukaryota"/>
</dbReference>
<dbReference type="GeneTree" id="ENSGT00950000182892"/>
<dbReference type="HOGENOM" id="CLU_024173_1_0_1"/>
<dbReference type="InParanoid" id="A5D7E9"/>
<dbReference type="OrthoDB" id="7458135at2759"/>
<dbReference type="TreeFam" id="TF326681"/>
<dbReference type="Proteomes" id="UP000009136">
    <property type="component" value="Chromosome 19"/>
</dbReference>
<dbReference type="Bgee" id="ENSBTAG00000013653">
    <property type="expression patterns" value="Expressed in corpus luteum and 105 other cell types or tissues"/>
</dbReference>
<dbReference type="GO" id="GO:0005789">
    <property type="term" value="C:endoplasmic reticulum membrane"/>
    <property type="evidence" value="ECO:0007669"/>
    <property type="project" value="UniProtKB-SubCell"/>
</dbReference>
<dbReference type="GO" id="GO:0005634">
    <property type="term" value="C:nucleus"/>
    <property type="evidence" value="ECO:0000318"/>
    <property type="project" value="GO_Central"/>
</dbReference>
<dbReference type="GO" id="GO:0000981">
    <property type="term" value="F:DNA-binding transcription factor activity, RNA polymerase II-specific"/>
    <property type="evidence" value="ECO:0000318"/>
    <property type="project" value="GO_Central"/>
</dbReference>
<dbReference type="GO" id="GO:0008289">
    <property type="term" value="F:lipid binding"/>
    <property type="evidence" value="ECO:0007669"/>
    <property type="project" value="UniProtKB-KW"/>
</dbReference>
<dbReference type="GO" id="GO:0000978">
    <property type="term" value="F:RNA polymerase II cis-regulatory region sequence-specific DNA binding"/>
    <property type="evidence" value="ECO:0000318"/>
    <property type="project" value="GO_Central"/>
</dbReference>
<dbReference type="GO" id="GO:0008203">
    <property type="term" value="P:cholesterol metabolic process"/>
    <property type="evidence" value="ECO:0007669"/>
    <property type="project" value="UniProtKB-KW"/>
</dbReference>
<dbReference type="GO" id="GO:0006357">
    <property type="term" value="P:regulation of transcription by RNA polymerase II"/>
    <property type="evidence" value="ECO:0000318"/>
    <property type="project" value="GO_Central"/>
</dbReference>
<dbReference type="CDD" id="cd14720">
    <property type="entry name" value="bZIP_NFE2-like"/>
    <property type="match status" value="1"/>
</dbReference>
<dbReference type="FunFam" id="1.10.880.10:FF:000001">
    <property type="entry name" value="Nuclear factor erythroid 2-related factor 2"/>
    <property type="match status" value="1"/>
</dbReference>
<dbReference type="Gene3D" id="1.10.880.10">
    <property type="entry name" value="Transcription factor, Skn-1-like, DNA-binding domain"/>
    <property type="match status" value="1"/>
</dbReference>
<dbReference type="InterPro" id="IPR004827">
    <property type="entry name" value="bZIP"/>
</dbReference>
<dbReference type="InterPro" id="IPR004826">
    <property type="entry name" value="bZIP_Maf"/>
</dbReference>
<dbReference type="InterPro" id="IPR047167">
    <property type="entry name" value="NFE2-like"/>
</dbReference>
<dbReference type="InterPro" id="IPR008917">
    <property type="entry name" value="TF_DNA-bd_sf"/>
</dbReference>
<dbReference type="PANTHER" id="PTHR24411:SF31">
    <property type="entry name" value="ENDOPLASMIC RETICULUM MEMBRANE SENSOR NFE2L1"/>
    <property type="match status" value="1"/>
</dbReference>
<dbReference type="PANTHER" id="PTHR24411">
    <property type="entry name" value="NUCLEAR FACTOR ERYTHROID 2-RELATED FACTOR"/>
    <property type="match status" value="1"/>
</dbReference>
<dbReference type="Pfam" id="PF03131">
    <property type="entry name" value="bZIP_Maf"/>
    <property type="match status" value="1"/>
</dbReference>
<dbReference type="SMART" id="SM00338">
    <property type="entry name" value="BRLZ"/>
    <property type="match status" value="1"/>
</dbReference>
<dbReference type="SUPFAM" id="SSF47454">
    <property type="entry name" value="A DNA-binding domain in eukaryotic transcription factors"/>
    <property type="match status" value="1"/>
</dbReference>
<dbReference type="PROSITE" id="PS50217">
    <property type="entry name" value="BZIP"/>
    <property type="match status" value="1"/>
</dbReference>
<dbReference type="PROSITE" id="PS00036">
    <property type="entry name" value="BZIP_BASIC"/>
    <property type="match status" value="1"/>
</dbReference>
<evidence type="ECO:0000250" key="1">
    <source>
        <dbReference type="UniProtKB" id="Q14494"/>
    </source>
</evidence>
<evidence type="ECO:0000250" key="2">
    <source>
        <dbReference type="UniProtKB" id="Q61985"/>
    </source>
</evidence>
<evidence type="ECO:0000255" key="3"/>
<evidence type="ECO:0000255" key="4">
    <source>
        <dbReference type="PROSITE-ProRule" id="PRU00978"/>
    </source>
</evidence>
<evidence type="ECO:0000256" key="5">
    <source>
        <dbReference type="SAM" id="MobiDB-lite"/>
    </source>
</evidence>
<evidence type="ECO:0000305" key="6"/>